<comment type="function">
    <text evidence="1 2">Deamination of 5-methylcytosine in DNA results in T/G mismatches. If unrepaired, these mismatches can lead to C-to-T transition mutations. The very short patch (VSP) repair process in E.coli counteracts the mutagenic process by repairing the mismatches in favor of the G-containing strand. This enzyme is an endonuclease that nicks double-stranded DNA within the sequence CT(AT)GN or NT(AT)GG next to the thymidine residue that is mismatched to 2'-deoxyguanosine. The incision is mismatch-dependent and strand-specific.</text>
</comment>
<comment type="cofactor">
    <cofactor>
        <name>Mg(2+)</name>
        <dbReference type="ChEBI" id="CHEBI:18420"/>
    </cofactor>
    <text>Binds 2 magnesium ions per subunit.</text>
</comment>
<comment type="cofactor">
    <cofactor>
        <name>Zn(2+)</name>
        <dbReference type="ChEBI" id="CHEBI:29105"/>
    </cofactor>
    <text>Binds 1 zinc ion per subunit.</text>
</comment>
<comment type="interaction">
    <interactant intactId="EBI-765033">
        <id>P09184</id>
    </interactant>
    <interactant intactId="EBI-554913">
        <id>P23367</id>
        <label>mutL</label>
    </interactant>
    <organismsDiffer>false</organismsDiffer>
    <experiments>3</experiments>
</comment>
<comment type="similarity">
    <text evidence="6">Belongs to the Vsr family.</text>
</comment>
<evidence type="ECO:0000269" key="1">
    <source>
    </source>
</evidence>
<evidence type="ECO:0000269" key="2">
    <source>
    </source>
</evidence>
<evidence type="ECO:0000303" key="3">
    <source>
    </source>
</evidence>
<evidence type="ECO:0000303" key="4">
    <source>
    </source>
</evidence>
<evidence type="ECO:0000303" key="5">
    <source>
    </source>
</evidence>
<evidence type="ECO:0000305" key="6"/>
<evidence type="ECO:0007829" key="7">
    <source>
        <dbReference type="PDB" id="1CW0"/>
    </source>
</evidence>
<evidence type="ECO:0007829" key="8">
    <source>
        <dbReference type="PDB" id="1VSR"/>
    </source>
</evidence>
<name>VSR_ECOLI</name>
<sequence>MADVHDKATRSKNMRAIATRDTAIEKRLASLLTGQGLAFRVQDASLPGRPDFVVDEYRCVIFTHGCFWHHHHCYLFKVPATRTEFWLEKIGKNVERDRRDISRLQELGWRVLIVWECALRGREKLTDEALTERLEEWICGEGASAQIDTQGIHLLA</sequence>
<accession>P09184</accession>
<keyword id="KW-0002">3D-structure</keyword>
<keyword id="KW-0227">DNA damage</keyword>
<keyword id="KW-0234">DNA repair</keyword>
<keyword id="KW-0255">Endonuclease</keyword>
<keyword id="KW-0378">Hydrolase</keyword>
<keyword id="KW-0460">Magnesium</keyword>
<keyword id="KW-0479">Metal-binding</keyword>
<keyword id="KW-0540">Nuclease</keyword>
<keyword id="KW-1185">Reference proteome</keyword>
<keyword id="KW-0862">Zinc</keyword>
<dbReference type="EC" id="3.1.-.-"/>
<dbReference type="EMBL" id="X13330">
    <property type="protein sequence ID" value="CAA31707.1"/>
    <property type="molecule type" value="Genomic_DNA"/>
</dbReference>
<dbReference type="EMBL" id="M32307">
    <property type="protein sequence ID" value="AAA03724.1"/>
    <property type="molecule type" value="Unassigned_DNA"/>
</dbReference>
<dbReference type="EMBL" id="U00096">
    <property type="protein sequence ID" value="AAC75026.1"/>
    <property type="molecule type" value="Genomic_DNA"/>
</dbReference>
<dbReference type="EMBL" id="AP009048">
    <property type="protein sequence ID" value="BAA15787.1"/>
    <property type="molecule type" value="Genomic_DNA"/>
</dbReference>
<dbReference type="PIR" id="JS0264">
    <property type="entry name" value="JS0264"/>
</dbReference>
<dbReference type="RefSeq" id="NP_416469.1">
    <property type="nucleotide sequence ID" value="NC_000913.3"/>
</dbReference>
<dbReference type="RefSeq" id="WP_000786005.1">
    <property type="nucleotide sequence ID" value="NZ_STEB01000050.1"/>
</dbReference>
<dbReference type="PDB" id="1CW0">
    <property type="method" value="X-ray"/>
    <property type="resolution" value="2.30 A"/>
    <property type="chains" value="A=2-156"/>
</dbReference>
<dbReference type="PDB" id="1ODG">
    <property type="method" value="X-ray"/>
    <property type="resolution" value="2.80 A"/>
    <property type="chains" value="A=23-156"/>
</dbReference>
<dbReference type="PDB" id="1VSR">
    <property type="method" value="X-ray"/>
    <property type="resolution" value="1.80 A"/>
    <property type="chains" value="A=21-156"/>
</dbReference>
<dbReference type="PDBsum" id="1CW0"/>
<dbReference type="PDBsum" id="1ODG"/>
<dbReference type="PDBsum" id="1VSR"/>
<dbReference type="SMR" id="P09184"/>
<dbReference type="BioGRID" id="4263264">
    <property type="interactions" value="82"/>
</dbReference>
<dbReference type="BioGRID" id="850827">
    <property type="interactions" value="2"/>
</dbReference>
<dbReference type="DIP" id="DIP-11114N"/>
<dbReference type="FunCoup" id="P09184">
    <property type="interactions" value="48"/>
</dbReference>
<dbReference type="IntAct" id="P09184">
    <property type="interactions" value="10"/>
</dbReference>
<dbReference type="STRING" id="511145.b1960"/>
<dbReference type="REBASE" id="13373">
    <property type="entry name" value="V.EcoW3110DcmP"/>
</dbReference>
<dbReference type="REBASE" id="175269">
    <property type="entry name" value="V.Rga4872ORF487P"/>
</dbReference>
<dbReference type="REBASE" id="175272">
    <property type="entry name" value="V.Rga4872ORF19P"/>
</dbReference>
<dbReference type="REBASE" id="232039">
    <property type="entry name" value="V.Sen4024DcmP"/>
</dbReference>
<dbReference type="REBASE" id="232757">
    <property type="entry name" value="V.Sen4839DcmP"/>
</dbReference>
<dbReference type="REBASE" id="3641">
    <property type="entry name" value="V.EcoKDcm"/>
</dbReference>
<dbReference type="PaxDb" id="511145-b1960"/>
<dbReference type="EnsemblBacteria" id="AAC75026">
    <property type="protein sequence ID" value="AAC75026"/>
    <property type="gene ID" value="b1960"/>
</dbReference>
<dbReference type="GeneID" id="86946875"/>
<dbReference type="GeneID" id="946476"/>
<dbReference type="KEGG" id="ecj:JW1943"/>
<dbReference type="KEGG" id="eco:b1960"/>
<dbReference type="KEGG" id="ecoc:C3026_11085"/>
<dbReference type="PATRIC" id="fig|1411691.4.peg.292"/>
<dbReference type="EchoBASE" id="EB1061"/>
<dbReference type="eggNOG" id="COG3727">
    <property type="taxonomic scope" value="Bacteria"/>
</dbReference>
<dbReference type="HOGENOM" id="CLU_111913_1_1_6"/>
<dbReference type="InParanoid" id="P09184"/>
<dbReference type="OMA" id="HDCYLFK"/>
<dbReference type="OrthoDB" id="9801520at2"/>
<dbReference type="PhylomeDB" id="P09184"/>
<dbReference type="BioCyc" id="EcoCyc:EG11068-MONOMER"/>
<dbReference type="EvolutionaryTrace" id="P09184"/>
<dbReference type="PRO" id="PR:P09184"/>
<dbReference type="Proteomes" id="UP000000625">
    <property type="component" value="Chromosome"/>
</dbReference>
<dbReference type="GO" id="GO:0003677">
    <property type="term" value="F:DNA binding"/>
    <property type="evidence" value="ECO:0000314"/>
    <property type="project" value="EcoCyc"/>
</dbReference>
<dbReference type="GO" id="GO:0046872">
    <property type="term" value="F:metal ion binding"/>
    <property type="evidence" value="ECO:0007669"/>
    <property type="project" value="UniProtKB-KW"/>
</dbReference>
<dbReference type="GO" id="GO:0043765">
    <property type="term" value="F:T/G mismatch-specific endonuclease activity"/>
    <property type="evidence" value="ECO:0000314"/>
    <property type="project" value="EcoCyc"/>
</dbReference>
<dbReference type="GO" id="GO:0006298">
    <property type="term" value="P:mismatch repair"/>
    <property type="evidence" value="ECO:0000314"/>
    <property type="project" value="EcoCyc"/>
</dbReference>
<dbReference type="CDD" id="cd00221">
    <property type="entry name" value="Vsr"/>
    <property type="match status" value="1"/>
</dbReference>
<dbReference type="FunFam" id="3.40.960.10:FF:000001">
    <property type="entry name" value="Very short patch repair endonuclease"/>
    <property type="match status" value="1"/>
</dbReference>
<dbReference type="Gene3D" id="3.40.960.10">
    <property type="entry name" value="VSR Endonuclease"/>
    <property type="match status" value="1"/>
</dbReference>
<dbReference type="InterPro" id="IPR004603">
    <property type="entry name" value="DNA_mismatch_endonuc_vsr"/>
</dbReference>
<dbReference type="InterPro" id="IPR011335">
    <property type="entry name" value="Restrct_endonuc-II-like"/>
</dbReference>
<dbReference type="NCBIfam" id="TIGR00632">
    <property type="entry name" value="vsr"/>
    <property type="match status" value="1"/>
</dbReference>
<dbReference type="Pfam" id="PF03852">
    <property type="entry name" value="Vsr"/>
    <property type="match status" value="1"/>
</dbReference>
<dbReference type="PIRSF" id="PIRSF018267">
    <property type="entry name" value="VSR_endonuc"/>
    <property type="match status" value="1"/>
</dbReference>
<dbReference type="SUPFAM" id="SSF52980">
    <property type="entry name" value="Restriction endonuclease-like"/>
    <property type="match status" value="1"/>
</dbReference>
<proteinExistence type="evidence at protein level"/>
<gene>
    <name evidence="5" type="primary">vsr</name>
    <name type="ordered locus">b1960</name>
    <name type="ordered locus">JW1943</name>
</gene>
<feature type="chain" id="PRO_0000200289" description="DNA mismatch endonuclease Vsr">
    <location>
        <begin position="1"/>
        <end position="156"/>
    </location>
</feature>
<feature type="binding site">
    <location>
        <position position="51"/>
    </location>
    <ligand>
        <name>Mg(2+)</name>
        <dbReference type="ChEBI" id="CHEBI:18420"/>
        <label>1</label>
    </ligand>
</feature>
<feature type="binding site">
    <location>
        <position position="51"/>
    </location>
    <ligand>
        <name>Mg(2+)</name>
        <dbReference type="ChEBI" id="CHEBI:18420"/>
        <label>2</label>
    </ligand>
</feature>
<feature type="binding site">
    <location>
        <position position="63"/>
    </location>
    <ligand>
        <name>Mg(2+)</name>
        <dbReference type="ChEBI" id="CHEBI:18420"/>
        <label>1</label>
    </ligand>
</feature>
<feature type="helix" evidence="7">
    <location>
        <begin position="7"/>
        <end position="15"/>
    </location>
</feature>
<feature type="strand" evidence="7">
    <location>
        <begin position="19"/>
        <end position="21"/>
    </location>
</feature>
<feature type="helix" evidence="8">
    <location>
        <begin position="26"/>
        <end position="34"/>
    </location>
</feature>
<feature type="strand" evidence="8">
    <location>
        <begin position="40"/>
        <end position="42"/>
    </location>
</feature>
<feature type="strand" evidence="8">
    <location>
        <begin position="51"/>
        <end position="54"/>
    </location>
</feature>
<feature type="helix" evidence="8">
    <location>
        <begin position="55"/>
        <end position="57"/>
    </location>
</feature>
<feature type="strand" evidence="8">
    <location>
        <begin position="59"/>
        <end position="64"/>
    </location>
</feature>
<feature type="turn" evidence="8">
    <location>
        <begin position="66"/>
        <end position="70"/>
    </location>
</feature>
<feature type="strand" evidence="8">
    <location>
        <begin position="80"/>
        <end position="82"/>
    </location>
</feature>
<feature type="helix" evidence="8">
    <location>
        <begin position="83"/>
        <end position="106"/>
    </location>
</feature>
<feature type="strand" evidence="8">
    <location>
        <begin position="110"/>
        <end position="115"/>
    </location>
</feature>
<feature type="helix" evidence="8">
    <location>
        <begin position="116"/>
        <end position="119"/>
    </location>
</feature>
<feature type="helix" evidence="8">
    <location>
        <begin position="127"/>
        <end position="139"/>
    </location>
</feature>
<feature type="strand" evidence="8">
    <location>
        <begin position="144"/>
        <end position="148"/>
    </location>
</feature>
<feature type="strand" evidence="8">
    <location>
        <begin position="151"/>
        <end position="154"/>
    </location>
</feature>
<protein>
    <recommendedName>
        <fullName>DNA mismatch endonuclease Vsr</fullName>
        <ecNumber>3.1.-.-</ecNumber>
    </recommendedName>
    <alternativeName>
        <fullName evidence="3">Type II nicking enzyme</fullName>
    </alternativeName>
    <alternativeName>
        <fullName evidence="3">V.EcoKDcm</fullName>
    </alternativeName>
    <alternativeName>
        <fullName>Very short patch repair protein</fullName>
    </alternativeName>
    <alternativeName>
        <fullName evidence="4">Vsr mismatch endonuclease</fullName>
    </alternativeName>
</protein>
<organism>
    <name type="scientific">Escherichia coli (strain K12)</name>
    <dbReference type="NCBI Taxonomy" id="83333"/>
    <lineage>
        <taxon>Bacteria</taxon>
        <taxon>Pseudomonadati</taxon>
        <taxon>Pseudomonadota</taxon>
        <taxon>Gammaproteobacteria</taxon>
        <taxon>Enterobacterales</taxon>
        <taxon>Enterobacteriaceae</taxon>
        <taxon>Escherichia</taxon>
    </lineage>
</organism>
<reference key="1">
    <citation type="journal article" date="1989" name="Nucleic Acids Res.">
        <title>Nucleotide sequence of the dcm locus of Escherichia coli K12.</title>
        <authorList>
            <person name="Hanck T."/>
            <person name="Gerwin N."/>
            <person name="Fritz H.-J."/>
        </authorList>
    </citation>
    <scope>NUCLEOTIDE SEQUENCE [GENOMIC DNA]</scope>
    <source>
        <strain>K12</strain>
    </source>
</reference>
<reference key="2">
    <citation type="journal article" date="1990" name="J. Bacteriol.">
        <title>A gene required for very short patch repair in Escherichia coli is adjacent to the DNA cytosine methylase gene.</title>
        <authorList>
            <person name="Sohail A."/>
            <person name="Lieb M."/>
            <person name="Dar M."/>
            <person name="Bhagwat A.S."/>
        </authorList>
    </citation>
    <scope>NUCLEOTIDE SEQUENCE [GENOMIC DNA]</scope>
</reference>
<reference key="3">
    <citation type="journal article" date="1996" name="DNA Res.">
        <title>A 460-kb DNA sequence of the Escherichia coli K-12 genome corresponding to the 40.1-50.0 min region on the linkage map.</title>
        <authorList>
            <person name="Itoh T."/>
            <person name="Aiba H."/>
            <person name="Baba T."/>
            <person name="Fujita K."/>
            <person name="Hayashi K."/>
            <person name="Inada T."/>
            <person name="Isono K."/>
            <person name="Kasai H."/>
            <person name="Kimura S."/>
            <person name="Kitakawa M."/>
            <person name="Kitagawa M."/>
            <person name="Makino K."/>
            <person name="Miki T."/>
            <person name="Mizobuchi K."/>
            <person name="Mori H."/>
            <person name="Mori T."/>
            <person name="Motomura K."/>
            <person name="Nakade S."/>
            <person name="Nakamura Y."/>
            <person name="Nashimoto H."/>
            <person name="Nishio Y."/>
            <person name="Oshima T."/>
            <person name="Saito N."/>
            <person name="Sampei G."/>
            <person name="Seki Y."/>
            <person name="Sivasundaram S."/>
            <person name="Tagami H."/>
            <person name="Takeda J."/>
            <person name="Takemoto K."/>
            <person name="Wada C."/>
            <person name="Yamamoto Y."/>
            <person name="Horiuchi T."/>
        </authorList>
    </citation>
    <scope>NUCLEOTIDE SEQUENCE [LARGE SCALE GENOMIC DNA]</scope>
    <source>
        <strain>K12 / W3110 / ATCC 27325 / DSM 5911</strain>
    </source>
</reference>
<reference key="4">
    <citation type="journal article" date="1997" name="Science">
        <title>The complete genome sequence of Escherichia coli K-12.</title>
        <authorList>
            <person name="Blattner F.R."/>
            <person name="Plunkett G. III"/>
            <person name="Bloch C.A."/>
            <person name="Perna N.T."/>
            <person name="Burland V."/>
            <person name="Riley M."/>
            <person name="Collado-Vides J."/>
            <person name="Glasner J.D."/>
            <person name="Rode C.K."/>
            <person name="Mayhew G.F."/>
            <person name="Gregor J."/>
            <person name="Davis N.W."/>
            <person name="Kirkpatrick H.A."/>
            <person name="Goeden M.A."/>
            <person name="Rose D.J."/>
            <person name="Mau B."/>
            <person name="Shao Y."/>
        </authorList>
    </citation>
    <scope>NUCLEOTIDE SEQUENCE [LARGE SCALE GENOMIC DNA]</scope>
    <source>
        <strain>K12 / MG1655 / ATCC 47076</strain>
    </source>
</reference>
<reference key="5">
    <citation type="journal article" date="2006" name="Mol. Syst. Biol.">
        <title>Highly accurate genome sequences of Escherichia coli K-12 strains MG1655 and W3110.</title>
        <authorList>
            <person name="Hayashi K."/>
            <person name="Morooka N."/>
            <person name="Yamamoto Y."/>
            <person name="Fujita K."/>
            <person name="Isono K."/>
            <person name="Choi S."/>
            <person name="Ohtsubo E."/>
            <person name="Baba T."/>
            <person name="Wanner B.L."/>
            <person name="Mori H."/>
            <person name="Horiuchi T."/>
        </authorList>
    </citation>
    <scope>NUCLEOTIDE SEQUENCE [LARGE SCALE GENOMIC DNA]</scope>
    <source>
        <strain>K12 / W3110 / ATCC 27325 / DSM 5911</strain>
    </source>
</reference>
<reference key="6">
    <citation type="journal article" date="1991" name="Nature">
        <title>The vsr gene product of E. coli K-12 is a strand- and sequence-specific DNA mismatch endonuclease.</title>
        <authorList>
            <person name="Hennecke F."/>
            <person name="Kolmar H."/>
            <person name="Bruendi K."/>
            <person name="Fritz H.-J."/>
        </authorList>
    </citation>
    <scope>FUNCTION</scope>
</reference>
<reference key="7">
    <citation type="journal article" date="2000" name="Nucleic Acids Res.">
        <title>Recognition of GT mismatches by Vsr mismatch endonuclease.</title>
        <authorList>
            <person name="Fox K.R."/>
            <person name="Allinson S.L."/>
            <person name="Sahagun-Krause H."/>
            <person name="Brown T."/>
        </authorList>
    </citation>
    <scope>FUNCTION</scope>
</reference>
<reference key="8">
    <citation type="journal article" date="2003" name="Nucleic Acids Res.">
        <title>A nomenclature for restriction enzymes, DNA methyltransferases, homing endonucleases and their genes.</title>
        <authorList>
            <person name="Roberts R.J."/>
            <person name="Belfort M."/>
            <person name="Bestor T."/>
            <person name="Bhagwat A.S."/>
            <person name="Bickle T.A."/>
            <person name="Bitinaite J."/>
            <person name="Blumenthal R.M."/>
            <person name="Degtyarev S.K."/>
            <person name="Dryden D.T."/>
            <person name="Dybvig K."/>
            <person name="Firman K."/>
            <person name="Gromova E.S."/>
            <person name="Gumport R.I."/>
            <person name="Halford S.E."/>
            <person name="Hattman S."/>
            <person name="Heitman J."/>
            <person name="Hornby D.P."/>
            <person name="Janulaitis A."/>
            <person name="Jeltsch A."/>
            <person name="Josephsen J."/>
            <person name="Kiss A."/>
            <person name="Klaenhammer T.R."/>
            <person name="Kobayashi I."/>
            <person name="Kong H."/>
            <person name="Krueger D.H."/>
            <person name="Lacks S."/>
            <person name="Marinus M.G."/>
            <person name="Miyahara M."/>
            <person name="Morgan R.D."/>
            <person name="Murray N.E."/>
            <person name="Nagaraja V."/>
            <person name="Piekarowicz A."/>
            <person name="Pingoud A."/>
            <person name="Raleigh E."/>
            <person name="Rao D.N."/>
            <person name="Reich N."/>
            <person name="Repin V.E."/>
            <person name="Selker E.U."/>
            <person name="Shaw P.C."/>
            <person name="Stein D.C."/>
            <person name="Stoddard B.L."/>
            <person name="Szybalski W."/>
            <person name="Trautner T.A."/>
            <person name="Van Etten J.L."/>
            <person name="Vitor J.M."/>
            <person name="Wilson G.G."/>
            <person name="Xu S.Y."/>
        </authorList>
    </citation>
    <scope>NOMENCLATURE</scope>
</reference>
<reference key="9">
    <citation type="journal article" date="1999" name="Cell">
        <title>Recognition of a TG mismatch: the crystal structure of very short patch repair endonuclease in complex with a DNA duplex.</title>
        <authorList>
            <person name="Tsutakawa S.E."/>
            <person name="Jingami H."/>
            <person name="Morikawa K."/>
        </authorList>
    </citation>
    <scope>X-RAY CRYSTALLOGRAPHY (2.3 ANGSTROMS)</scope>
</reference>
<reference key="10">
    <citation type="journal article" date="1999" name="Mol. Cell">
        <title>Crystallographic and functional studies of very short patch repair endonuclease.</title>
        <authorList>
            <person name="Tsutakawa S.E."/>
            <person name="Muto T."/>
            <person name="Kawate T."/>
            <person name="Jingami H."/>
            <person name="Kunishima N."/>
            <person name="Ariyoshi M."/>
            <person name="Kohda D."/>
            <person name="Nakagawa M."/>
            <person name="Morikawa K."/>
        </authorList>
    </citation>
    <scope>X-RAY CRYSTALLOGRAPHY (1.8 ANGSTROMS) OF 22-157</scope>
</reference>